<comment type="function">
    <text evidence="1">Mediates both low-affinity uptake and efflux of sugar across the plasma membrane.</text>
</comment>
<comment type="subunit">
    <text evidence="1">Forms homooligomers and/or heterooligomers.</text>
</comment>
<comment type="subcellular location">
    <subcellularLocation>
        <location evidence="1">Cell membrane</location>
        <topology evidence="1">Multi-pass membrane protein</topology>
    </subcellularLocation>
</comment>
<comment type="similarity">
    <text evidence="3">Belongs to the SWEET sugar transporter family.</text>
</comment>
<sequence>MDWAAPALTSFVADSSYRHLCCYGAGIAGNVFAFVLFISPLPTFKRIVRNGSTEQFSAMPYIYSLLNCLICMWYGLPFVSYGVVLVATVNSIGAVFQLAYTAVFIAFADAKQRLKVSALLAAVFVVFGLIVFVSLALLDHPTRQMFVGYLSVASLIFMFASPLSIINLVIRTKSVEYMPFYLSLSMFLMSASFFGYGVLLNDFFIYIPNGIGTILGIIQLVLYAYFRKGSSEEAKLPLLVTHT</sequence>
<evidence type="ECO:0000250" key="1">
    <source>
        <dbReference type="UniProtKB" id="Q8L9J7"/>
    </source>
</evidence>
<evidence type="ECO:0000255" key="2"/>
<evidence type="ECO:0000305" key="3"/>
<reference key="1">
    <citation type="journal article" date="2009" name="Nature">
        <title>The Sorghum bicolor genome and the diversification of grasses.</title>
        <authorList>
            <person name="Paterson A.H."/>
            <person name="Bowers J.E."/>
            <person name="Bruggmann R."/>
            <person name="Dubchak I."/>
            <person name="Grimwood J."/>
            <person name="Gundlach H."/>
            <person name="Haberer G."/>
            <person name="Hellsten U."/>
            <person name="Mitros T."/>
            <person name="Poliakov A."/>
            <person name="Schmutz J."/>
            <person name="Spannagl M."/>
            <person name="Tang H."/>
            <person name="Wang X."/>
            <person name="Wicker T."/>
            <person name="Bharti A.K."/>
            <person name="Chapman J."/>
            <person name="Feltus F.A."/>
            <person name="Gowik U."/>
            <person name="Grigoriev I.V."/>
            <person name="Lyons E."/>
            <person name="Maher C.A."/>
            <person name="Martis M."/>
            <person name="Narechania A."/>
            <person name="Otillar R.P."/>
            <person name="Penning B.W."/>
            <person name="Salamov A.A."/>
            <person name="Wang Y."/>
            <person name="Zhang L."/>
            <person name="Carpita N.C."/>
            <person name="Freeling M."/>
            <person name="Gingle A.R."/>
            <person name="Hash C.T."/>
            <person name="Keller B."/>
            <person name="Klein P."/>
            <person name="Kresovich S."/>
            <person name="McCann M.C."/>
            <person name="Ming R."/>
            <person name="Peterson D.G."/>
            <person name="Mehboob-ur-Rahman M."/>
            <person name="Ware D."/>
            <person name="Westhoff P."/>
            <person name="Mayer K.F.X."/>
            <person name="Messing J."/>
            <person name="Rokhsar D.S."/>
        </authorList>
    </citation>
    <scope>NUCLEOTIDE SEQUENCE [LARGE SCALE GENOMIC DNA]</scope>
    <source>
        <strain>cv. BTx623</strain>
    </source>
</reference>
<reference key="2">
    <citation type="journal article" date="2018" name="Plant J.">
        <title>The Sorghum bicolor reference genome: improved assembly, gene annotations, a transcriptome atlas, and signatures of genome organization.</title>
        <authorList>
            <person name="McCormick R.F."/>
            <person name="Truong S.K."/>
            <person name="Sreedasyam A."/>
            <person name="Jenkins J."/>
            <person name="Shu S."/>
            <person name="Sims D."/>
            <person name="Kennedy M."/>
            <person name="Amirebrahimi M."/>
            <person name="Weers B.D."/>
            <person name="McKinley B."/>
            <person name="Mattison A."/>
            <person name="Morishige D.T."/>
            <person name="Grimwood J."/>
            <person name="Schmutz J."/>
            <person name="Mullet J.E."/>
        </authorList>
    </citation>
    <scope>GENOME REANNOTATION</scope>
    <source>
        <strain>cv. BTx623</strain>
    </source>
</reference>
<gene>
    <name evidence="3" type="primary">SWEET2A</name>
    <name evidence="3" type="ordered locus">Sb03g024250</name>
</gene>
<organism>
    <name type="scientific">Sorghum bicolor</name>
    <name type="common">Sorghum</name>
    <name type="synonym">Sorghum vulgare</name>
    <dbReference type="NCBI Taxonomy" id="4558"/>
    <lineage>
        <taxon>Eukaryota</taxon>
        <taxon>Viridiplantae</taxon>
        <taxon>Streptophyta</taxon>
        <taxon>Embryophyta</taxon>
        <taxon>Tracheophyta</taxon>
        <taxon>Spermatophyta</taxon>
        <taxon>Magnoliopsida</taxon>
        <taxon>Liliopsida</taxon>
        <taxon>Poales</taxon>
        <taxon>Poaceae</taxon>
        <taxon>PACMAD clade</taxon>
        <taxon>Panicoideae</taxon>
        <taxon>Andropogonodae</taxon>
        <taxon>Andropogoneae</taxon>
        <taxon>Sorghinae</taxon>
        <taxon>Sorghum</taxon>
    </lineage>
</organism>
<accession>P0DKJ4</accession>
<keyword id="KW-1003">Cell membrane</keyword>
<keyword id="KW-0472">Membrane</keyword>
<keyword id="KW-1185">Reference proteome</keyword>
<keyword id="KW-0677">Repeat</keyword>
<keyword id="KW-0762">Sugar transport</keyword>
<keyword id="KW-0812">Transmembrane</keyword>
<keyword id="KW-1133">Transmembrane helix</keyword>
<keyword id="KW-0813">Transport</keyword>
<feature type="chain" id="PRO_0000434109" description="Bidirectional sugar transporter SWEET2a">
    <location>
        <begin position="1"/>
        <end position="243"/>
    </location>
</feature>
<feature type="topological domain" description="Extracellular" evidence="3">
    <location>
        <begin position="1"/>
        <end position="23"/>
    </location>
</feature>
<feature type="transmembrane region" description="Helical; Name=1" evidence="2">
    <location>
        <begin position="24"/>
        <end position="44"/>
    </location>
</feature>
<feature type="topological domain" description="Cytoplasmic" evidence="3">
    <location>
        <begin position="45"/>
        <end position="57"/>
    </location>
</feature>
<feature type="transmembrane region" description="Helical; Name=2" evidence="2">
    <location>
        <begin position="58"/>
        <end position="80"/>
    </location>
</feature>
<feature type="topological domain" description="Extracellular" evidence="3">
    <location>
        <begin position="81"/>
        <end position="89"/>
    </location>
</feature>
<feature type="transmembrane region" description="Helical; Name=3" evidence="2">
    <location>
        <begin position="90"/>
        <end position="110"/>
    </location>
</feature>
<feature type="topological domain" description="Cytoplasmic" evidence="3">
    <location>
        <begin position="111"/>
        <end position="117"/>
    </location>
</feature>
<feature type="transmembrane region" description="Helical; Name=4" evidence="2">
    <location>
        <begin position="118"/>
        <end position="138"/>
    </location>
</feature>
<feature type="topological domain" description="Extracellular" evidence="3">
    <location>
        <begin position="139"/>
        <end position="145"/>
    </location>
</feature>
<feature type="transmembrane region" description="Helical; Name=5" evidence="2">
    <location>
        <begin position="146"/>
        <end position="166"/>
    </location>
</feature>
<feature type="topological domain" description="Cytoplasmic" evidence="3">
    <location>
        <begin position="167"/>
        <end position="179"/>
    </location>
</feature>
<feature type="transmembrane region" description="Helical; Name=6" evidence="2">
    <location>
        <begin position="180"/>
        <end position="200"/>
    </location>
</feature>
<feature type="topological domain" description="Extracellular" evidence="3">
    <location>
        <begin position="201"/>
        <end position="202"/>
    </location>
</feature>
<feature type="transmembrane region" description="Helical; Name=7" evidence="2">
    <location>
        <begin position="203"/>
        <end position="223"/>
    </location>
</feature>
<feature type="topological domain" description="Cytoplasmic" evidence="3">
    <location>
        <begin position="224"/>
        <end position="243"/>
    </location>
</feature>
<feature type="domain" description="MtN3/slv 1" evidence="3">
    <location>
        <begin position="24"/>
        <end position="111"/>
    </location>
</feature>
<feature type="domain" description="MtN3/slv 2" evidence="3">
    <location>
        <begin position="147"/>
        <end position="230"/>
    </location>
</feature>
<proteinExistence type="inferred from homology"/>
<protein>
    <recommendedName>
        <fullName evidence="3">Bidirectional sugar transporter SWEET2a</fullName>
        <shortName evidence="3">SbSWEET2a</shortName>
    </recommendedName>
</protein>
<dbReference type="EMBL" id="CM000762">
    <property type="status" value="NOT_ANNOTATED_CDS"/>
    <property type="molecule type" value="Genomic_DNA"/>
</dbReference>
<dbReference type="SMR" id="P0DKJ4"/>
<dbReference type="FunCoup" id="P0DKJ4">
    <property type="interactions" value="364"/>
</dbReference>
<dbReference type="EnsemblPlants" id="KXG32676">
    <property type="protein sequence ID" value="KXG32676"/>
    <property type="gene ID" value="SORBI_3003G182800"/>
</dbReference>
<dbReference type="EnsemblPlants" id="KXG32677">
    <property type="protein sequence ID" value="KXG32677"/>
    <property type="gene ID" value="SORBI_3003G182800"/>
</dbReference>
<dbReference type="Gramene" id="KXG32676">
    <property type="protein sequence ID" value="KXG32676"/>
    <property type="gene ID" value="SORBI_3003G182800"/>
</dbReference>
<dbReference type="Gramene" id="KXG32677">
    <property type="protein sequence ID" value="KXG32677"/>
    <property type="gene ID" value="SORBI_3003G182800"/>
</dbReference>
<dbReference type="eggNOG" id="KOG1623">
    <property type="taxonomic scope" value="Eukaryota"/>
</dbReference>
<dbReference type="InParanoid" id="P0DKJ4"/>
<dbReference type="OMA" id="QLNDYYI"/>
<dbReference type="OrthoDB" id="409725at2759"/>
<dbReference type="Proteomes" id="UP000000768">
    <property type="component" value="Chromosome 3"/>
</dbReference>
<dbReference type="ExpressionAtlas" id="P0DKJ4">
    <property type="expression patterns" value="baseline and differential"/>
</dbReference>
<dbReference type="GO" id="GO:0016020">
    <property type="term" value="C:membrane"/>
    <property type="evidence" value="ECO:0000318"/>
    <property type="project" value="GO_Central"/>
</dbReference>
<dbReference type="GO" id="GO:0005886">
    <property type="term" value="C:plasma membrane"/>
    <property type="evidence" value="ECO:0007669"/>
    <property type="project" value="UniProtKB-SubCell"/>
</dbReference>
<dbReference type="GO" id="GO:0051119">
    <property type="term" value="F:sugar transmembrane transporter activity"/>
    <property type="evidence" value="ECO:0000318"/>
    <property type="project" value="GO_Central"/>
</dbReference>
<dbReference type="GO" id="GO:0008643">
    <property type="term" value="P:carbohydrate transport"/>
    <property type="evidence" value="ECO:0000318"/>
    <property type="project" value="GO_Central"/>
</dbReference>
<dbReference type="FunFam" id="1.20.1280.290:FF:000001">
    <property type="entry name" value="Bidirectional sugar transporter SWEET"/>
    <property type="match status" value="1"/>
</dbReference>
<dbReference type="FunFam" id="1.20.1280.290:FF:000002">
    <property type="entry name" value="Bidirectional sugar transporter SWEET"/>
    <property type="match status" value="1"/>
</dbReference>
<dbReference type="Gene3D" id="1.20.1280.290">
    <property type="match status" value="2"/>
</dbReference>
<dbReference type="InterPro" id="IPR047664">
    <property type="entry name" value="SWEET"/>
</dbReference>
<dbReference type="InterPro" id="IPR004316">
    <property type="entry name" value="SWEET_rpt"/>
</dbReference>
<dbReference type="PANTHER" id="PTHR10791:SF57">
    <property type="entry name" value="BIDIRECTIONAL SUGAR TRANSPORTER SWEET2A"/>
    <property type="match status" value="1"/>
</dbReference>
<dbReference type="PANTHER" id="PTHR10791">
    <property type="entry name" value="RAG1-ACTIVATING PROTEIN 1"/>
    <property type="match status" value="1"/>
</dbReference>
<dbReference type="Pfam" id="PF03083">
    <property type="entry name" value="MtN3_slv"/>
    <property type="match status" value="2"/>
</dbReference>
<name>SWT2A_SORBI</name>